<comment type="function">
    <text evidence="1">Required for the chromophorylation of the CpcA gene product.</text>
</comment>
<comment type="subunit">
    <text evidence="1">CpcE and CpcF associate to form a lyase.</text>
</comment>
<comment type="similarity">
    <text evidence="2">Belongs to the CpcE/RpcE/PecE family.</text>
</comment>
<comment type="caution">
    <text evidence="3">Was originally thought to be a linker peptide.</text>
</comment>
<sequence length="276" mass="29628">MIEPSVEEFPAENGPQLTPELAIANLQSSDLSLRYYAAWWLGKYRVKESAAVDALIAALEDEADRTELGGYPLRRNAARALGKLGNRKAVPGLINCLECPDFYVREAAAQSLEMLKDKTAAPALIKLLDGGVAQAVQVTGRPHLVQPYEAVLEALGAIGATDAIPLIQPFLEHPVSRVQCAAARAMYQLTQEPVYGELLVKVLAGNDLNLRRVALGDLGAIGYLAAAEAIANAKAENSFKLIALKGLLEHQMSAESNALSISDQAIRVMNLMDSLL</sequence>
<name>CPCE_NOSS1</name>
<organism>
    <name type="scientific">Nostoc sp. (strain PCC 7120 / SAG 25.82 / UTEX 2576)</name>
    <dbReference type="NCBI Taxonomy" id="103690"/>
    <lineage>
        <taxon>Bacteria</taxon>
        <taxon>Bacillati</taxon>
        <taxon>Cyanobacteriota</taxon>
        <taxon>Cyanophyceae</taxon>
        <taxon>Nostocales</taxon>
        <taxon>Nostocaceae</taxon>
        <taxon>Nostoc</taxon>
    </lineage>
</organism>
<feature type="chain" id="PRO_0000199266" description="Phycocyanobilin lyase subunit alpha">
    <location>
        <begin position="1"/>
        <end position="276"/>
    </location>
</feature>
<feature type="strand" evidence="4">
    <location>
        <begin position="13"/>
        <end position="15"/>
    </location>
</feature>
<feature type="helix" evidence="4">
    <location>
        <begin position="19"/>
        <end position="25"/>
    </location>
</feature>
<feature type="helix" evidence="4">
    <location>
        <begin position="31"/>
        <end position="43"/>
    </location>
</feature>
<feature type="helix" evidence="4">
    <location>
        <begin position="49"/>
        <end position="58"/>
    </location>
</feature>
<feature type="helix" evidence="4">
    <location>
        <begin position="67"/>
        <end position="69"/>
    </location>
</feature>
<feature type="helix" evidence="4">
    <location>
        <begin position="72"/>
        <end position="83"/>
    </location>
</feature>
<feature type="helix" evidence="4">
    <location>
        <begin position="87"/>
        <end position="89"/>
    </location>
</feature>
<feature type="helix" evidence="4">
    <location>
        <begin position="90"/>
        <end position="96"/>
    </location>
</feature>
<feature type="helix" evidence="4">
    <location>
        <begin position="102"/>
        <end position="115"/>
    </location>
</feature>
<feature type="helix" evidence="4">
    <location>
        <begin position="118"/>
        <end position="120"/>
    </location>
</feature>
<feature type="helix" evidence="4">
    <location>
        <begin position="121"/>
        <end position="126"/>
    </location>
</feature>
<feature type="turn" evidence="4">
    <location>
        <begin position="127"/>
        <end position="131"/>
    </location>
</feature>
<feature type="helix" evidence="4">
    <location>
        <begin position="132"/>
        <end position="134"/>
    </location>
</feature>
<feature type="helix" evidence="4">
    <location>
        <begin position="148"/>
        <end position="157"/>
    </location>
</feature>
<feature type="helix" evidence="4">
    <location>
        <begin position="161"/>
        <end position="163"/>
    </location>
</feature>
<feature type="helix" evidence="4">
    <location>
        <begin position="164"/>
        <end position="167"/>
    </location>
</feature>
<feature type="helix" evidence="4">
    <location>
        <begin position="168"/>
        <end position="172"/>
    </location>
</feature>
<feature type="helix" evidence="4">
    <location>
        <begin position="176"/>
        <end position="190"/>
    </location>
</feature>
<feature type="helix" evidence="4">
    <location>
        <begin position="193"/>
        <end position="203"/>
    </location>
</feature>
<feature type="helix" evidence="4">
    <location>
        <begin position="208"/>
        <end position="221"/>
    </location>
</feature>
<feature type="helix" evidence="4">
    <location>
        <begin position="224"/>
        <end position="226"/>
    </location>
</feature>
<feature type="helix" evidence="4">
    <location>
        <begin position="227"/>
        <end position="232"/>
    </location>
</feature>
<feature type="strand" evidence="4">
    <location>
        <begin position="233"/>
        <end position="235"/>
    </location>
</feature>
<feature type="helix" evidence="4">
    <location>
        <begin position="237"/>
        <end position="250"/>
    </location>
</feature>
<feature type="helix" evidence="4">
    <location>
        <begin position="263"/>
        <end position="273"/>
    </location>
</feature>
<reference key="1">
    <citation type="journal article" date="1987" name="EMBO J.">
        <title>Cloning and light regulation of expression of the phycocyanin operon of the cyanobacterium Anabaena.</title>
        <authorList>
            <person name="Belknap W.R."/>
            <person name="Haselkorn R."/>
        </authorList>
    </citation>
    <scope>NUCLEOTIDE SEQUENCE [GENOMIC DNA]</scope>
</reference>
<reference key="2">
    <citation type="journal article" date="2001" name="Anal. Biochem.">
        <title>Recombinant phycobiliproteins. Recombinant C-phycocyanins equipped with affinity tags, oligomerization, and biospecific recognition domains.</title>
        <authorList>
            <person name="Cai Y.A."/>
            <person name="Murphy J.T."/>
            <person name="Wedemayer G.J."/>
            <person name="Glazer A.N."/>
        </authorList>
    </citation>
    <scope>NUCLEOTIDE SEQUENCE [GENOMIC DNA]</scope>
</reference>
<reference key="3">
    <citation type="journal article" date="2001" name="DNA Res.">
        <title>Complete genomic sequence of the filamentous nitrogen-fixing cyanobacterium Anabaena sp. strain PCC 7120.</title>
        <authorList>
            <person name="Kaneko T."/>
            <person name="Nakamura Y."/>
            <person name="Wolk C.P."/>
            <person name="Kuritz T."/>
            <person name="Sasamoto S."/>
            <person name="Watanabe A."/>
            <person name="Iriguchi M."/>
            <person name="Ishikawa A."/>
            <person name="Kawashima K."/>
            <person name="Kimura T."/>
            <person name="Kishida Y."/>
            <person name="Kohara M."/>
            <person name="Matsumoto M."/>
            <person name="Matsuno A."/>
            <person name="Muraki A."/>
            <person name="Nakazaki N."/>
            <person name="Shimpo S."/>
            <person name="Sugimoto M."/>
            <person name="Takazawa M."/>
            <person name="Yamada M."/>
            <person name="Yasuda M."/>
            <person name="Tabata S."/>
        </authorList>
    </citation>
    <scope>NUCLEOTIDE SEQUENCE [LARGE SCALE GENOMIC DNA]</scope>
    <source>
        <strain>PCC 7120 / SAG 25.82 / UTEX 2576</strain>
    </source>
</reference>
<gene>
    <name type="primary">cpcE</name>
    <name type="ordered locus">alr0532</name>
</gene>
<evidence type="ECO:0000250" key="1"/>
<evidence type="ECO:0000305" key="2"/>
<evidence type="ECO:0000305" key="3">
    <source>
    </source>
</evidence>
<evidence type="ECO:0007829" key="4">
    <source>
        <dbReference type="PDB" id="5N3U"/>
    </source>
</evidence>
<proteinExistence type="evidence at protein level"/>
<protein>
    <recommendedName>
        <fullName>Phycocyanobilin lyase subunit alpha</fullName>
        <ecNumber>4.-.-.-</ecNumber>
    </recommendedName>
    <alternativeName>
        <fullName>Phycocyanin operon protein CpcE</fullName>
    </alternativeName>
</protein>
<accession>P07125</accession>
<dbReference type="EC" id="4.-.-.-"/>
<dbReference type="EMBL" id="X05239">
    <property type="protein sequence ID" value="CAA28866.1"/>
    <property type="molecule type" value="Genomic_DNA"/>
</dbReference>
<dbReference type="EMBL" id="AF178757">
    <property type="protein sequence ID" value="AAG09320.1"/>
    <property type="molecule type" value="Genomic_DNA"/>
</dbReference>
<dbReference type="EMBL" id="BA000019">
    <property type="protein sequence ID" value="BAB72490.1"/>
    <property type="molecule type" value="Genomic_DNA"/>
</dbReference>
<dbReference type="PIR" id="AC1873">
    <property type="entry name" value="AC1873"/>
</dbReference>
<dbReference type="RefSeq" id="WP_010994708.1">
    <property type="nucleotide sequence ID" value="NZ_RSCN01000059.1"/>
</dbReference>
<dbReference type="PDB" id="5N3U">
    <property type="method" value="X-ray"/>
    <property type="resolution" value="1.89 A"/>
    <property type="chains" value="A=1-276"/>
</dbReference>
<dbReference type="PDBsum" id="5N3U"/>
<dbReference type="SMR" id="P07125"/>
<dbReference type="STRING" id="103690.gene:10492543"/>
<dbReference type="KEGG" id="ana:alr0532"/>
<dbReference type="eggNOG" id="COG1413">
    <property type="taxonomic scope" value="Bacteria"/>
</dbReference>
<dbReference type="OrthoDB" id="454552at2"/>
<dbReference type="BRENDA" id="4.4.1.32">
    <property type="organism ID" value="8113"/>
</dbReference>
<dbReference type="Proteomes" id="UP000002483">
    <property type="component" value="Chromosome"/>
</dbReference>
<dbReference type="GO" id="GO:0030089">
    <property type="term" value="C:phycobilisome"/>
    <property type="evidence" value="ECO:0007669"/>
    <property type="project" value="UniProtKB-KW"/>
</dbReference>
<dbReference type="GO" id="GO:0016829">
    <property type="term" value="F:lyase activity"/>
    <property type="evidence" value="ECO:0007669"/>
    <property type="project" value="UniProtKB-KW"/>
</dbReference>
<dbReference type="GO" id="GO:0016491">
    <property type="term" value="F:oxidoreductase activity"/>
    <property type="evidence" value="ECO:0007669"/>
    <property type="project" value="TreeGrafter"/>
</dbReference>
<dbReference type="Gene3D" id="1.25.10.10">
    <property type="entry name" value="Leucine-rich Repeat Variant"/>
    <property type="match status" value="2"/>
</dbReference>
<dbReference type="InterPro" id="IPR011989">
    <property type="entry name" value="ARM-like"/>
</dbReference>
<dbReference type="InterPro" id="IPR016024">
    <property type="entry name" value="ARM-type_fold"/>
</dbReference>
<dbReference type="InterPro" id="IPR004155">
    <property type="entry name" value="PBS_lyase_HEAT"/>
</dbReference>
<dbReference type="PANTHER" id="PTHR12697">
    <property type="entry name" value="PBS LYASE HEAT-LIKE PROTEIN"/>
    <property type="match status" value="1"/>
</dbReference>
<dbReference type="PANTHER" id="PTHR12697:SF40">
    <property type="entry name" value="PHYCOCYANOBILIN LYASE SUBUNIT ALPHA"/>
    <property type="match status" value="1"/>
</dbReference>
<dbReference type="Pfam" id="PF13646">
    <property type="entry name" value="HEAT_2"/>
    <property type="match status" value="2"/>
</dbReference>
<dbReference type="Pfam" id="PF03130">
    <property type="entry name" value="HEAT_PBS"/>
    <property type="match status" value="1"/>
</dbReference>
<dbReference type="SMART" id="SM00567">
    <property type="entry name" value="EZ_HEAT"/>
    <property type="match status" value="6"/>
</dbReference>
<dbReference type="SUPFAM" id="SSF48371">
    <property type="entry name" value="ARM repeat"/>
    <property type="match status" value="1"/>
</dbReference>
<keyword id="KW-0002">3D-structure</keyword>
<keyword id="KW-0042">Antenna complex</keyword>
<keyword id="KW-0456">Lyase</keyword>
<keyword id="KW-0605">Phycobilisome</keyword>
<keyword id="KW-1185">Reference proteome</keyword>